<gene>
    <name evidence="1" type="primary">rplE</name>
    <name type="ordered locus">Franean1_6037</name>
</gene>
<name>RL5_PARS2</name>
<keyword id="KW-0687">Ribonucleoprotein</keyword>
<keyword id="KW-0689">Ribosomal protein</keyword>
<keyword id="KW-0694">RNA-binding</keyword>
<keyword id="KW-0699">rRNA-binding</keyword>
<keyword id="KW-0820">tRNA-binding</keyword>
<sequence>MSVTTEARPVPRLKQRYREEIAPALREEFSYGNVMQIPGVVKVVVNMGVGDAARDAKLIDGATRDLAAITGQKPAVRRAKKSIAQFKLREGQPIGAKVTLRGDRMWEFLDRLVTIALPRIRDFRGLSPKQFDGAGNYTFGVIEQSIFHEIDIDRIDRVRGMDITVVTTATNDDEGRALLRALGFPFRES</sequence>
<dbReference type="EMBL" id="CP000820">
    <property type="protein sequence ID" value="ABW15381.1"/>
    <property type="molecule type" value="Genomic_DNA"/>
</dbReference>
<dbReference type="RefSeq" id="WP_020463471.1">
    <property type="nucleotide sequence ID" value="NC_009921.1"/>
</dbReference>
<dbReference type="SMR" id="A8LC44"/>
<dbReference type="STRING" id="298653.Franean1_6037"/>
<dbReference type="KEGG" id="fre:Franean1_6037"/>
<dbReference type="eggNOG" id="COG0094">
    <property type="taxonomic scope" value="Bacteria"/>
</dbReference>
<dbReference type="HOGENOM" id="CLU_061015_2_1_11"/>
<dbReference type="GO" id="GO:1990904">
    <property type="term" value="C:ribonucleoprotein complex"/>
    <property type="evidence" value="ECO:0007669"/>
    <property type="project" value="UniProtKB-KW"/>
</dbReference>
<dbReference type="GO" id="GO:0005840">
    <property type="term" value="C:ribosome"/>
    <property type="evidence" value="ECO:0007669"/>
    <property type="project" value="UniProtKB-KW"/>
</dbReference>
<dbReference type="GO" id="GO:0019843">
    <property type="term" value="F:rRNA binding"/>
    <property type="evidence" value="ECO:0007669"/>
    <property type="project" value="UniProtKB-UniRule"/>
</dbReference>
<dbReference type="GO" id="GO:0003735">
    <property type="term" value="F:structural constituent of ribosome"/>
    <property type="evidence" value="ECO:0007669"/>
    <property type="project" value="InterPro"/>
</dbReference>
<dbReference type="GO" id="GO:0000049">
    <property type="term" value="F:tRNA binding"/>
    <property type="evidence" value="ECO:0007669"/>
    <property type="project" value="UniProtKB-UniRule"/>
</dbReference>
<dbReference type="GO" id="GO:0006412">
    <property type="term" value="P:translation"/>
    <property type="evidence" value="ECO:0007669"/>
    <property type="project" value="UniProtKB-UniRule"/>
</dbReference>
<dbReference type="FunFam" id="3.30.1440.10:FF:000001">
    <property type="entry name" value="50S ribosomal protein L5"/>
    <property type="match status" value="1"/>
</dbReference>
<dbReference type="Gene3D" id="3.30.1440.10">
    <property type="match status" value="1"/>
</dbReference>
<dbReference type="HAMAP" id="MF_01333_B">
    <property type="entry name" value="Ribosomal_uL5_B"/>
    <property type="match status" value="1"/>
</dbReference>
<dbReference type="InterPro" id="IPR002132">
    <property type="entry name" value="Ribosomal_uL5"/>
</dbReference>
<dbReference type="InterPro" id="IPR020930">
    <property type="entry name" value="Ribosomal_uL5_bac-type"/>
</dbReference>
<dbReference type="InterPro" id="IPR031309">
    <property type="entry name" value="Ribosomal_uL5_C"/>
</dbReference>
<dbReference type="InterPro" id="IPR022803">
    <property type="entry name" value="Ribosomal_uL5_dom_sf"/>
</dbReference>
<dbReference type="InterPro" id="IPR031310">
    <property type="entry name" value="Ribosomal_uL5_N"/>
</dbReference>
<dbReference type="NCBIfam" id="NF000585">
    <property type="entry name" value="PRK00010.1"/>
    <property type="match status" value="1"/>
</dbReference>
<dbReference type="PANTHER" id="PTHR11994">
    <property type="entry name" value="60S RIBOSOMAL PROTEIN L11-RELATED"/>
    <property type="match status" value="1"/>
</dbReference>
<dbReference type="Pfam" id="PF00281">
    <property type="entry name" value="Ribosomal_L5"/>
    <property type="match status" value="1"/>
</dbReference>
<dbReference type="Pfam" id="PF00673">
    <property type="entry name" value="Ribosomal_L5_C"/>
    <property type="match status" value="1"/>
</dbReference>
<dbReference type="PIRSF" id="PIRSF002161">
    <property type="entry name" value="Ribosomal_L5"/>
    <property type="match status" value="1"/>
</dbReference>
<dbReference type="SUPFAM" id="SSF55282">
    <property type="entry name" value="RL5-like"/>
    <property type="match status" value="1"/>
</dbReference>
<proteinExistence type="inferred from homology"/>
<organism>
    <name type="scientific">Parafrankia sp. (strain EAN1pec)</name>
    <dbReference type="NCBI Taxonomy" id="298653"/>
    <lineage>
        <taxon>Bacteria</taxon>
        <taxon>Bacillati</taxon>
        <taxon>Actinomycetota</taxon>
        <taxon>Actinomycetes</taxon>
        <taxon>Frankiales</taxon>
        <taxon>Frankiaceae</taxon>
        <taxon>Parafrankia</taxon>
    </lineage>
</organism>
<evidence type="ECO:0000255" key="1">
    <source>
        <dbReference type="HAMAP-Rule" id="MF_01333"/>
    </source>
</evidence>
<evidence type="ECO:0000305" key="2"/>
<protein>
    <recommendedName>
        <fullName evidence="1">Large ribosomal subunit protein uL5</fullName>
    </recommendedName>
    <alternativeName>
        <fullName evidence="2">50S ribosomal protein L5</fullName>
    </alternativeName>
</protein>
<reference key="1">
    <citation type="journal article" date="2007" name="Genome Res.">
        <title>Genome characteristics of facultatively symbiotic Frankia sp. strains reflect host range and host plant biogeography.</title>
        <authorList>
            <person name="Normand P."/>
            <person name="Lapierre P."/>
            <person name="Tisa L.S."/>
            <person name="Gogarten J.P."/>
            <person name="Alloisio N."/>
            <person name="Bagnarol E."/>
            <person name="Bassi C.A."/>
            <person name="Berry A.M."/>
            <person name="Bickhart D.M."/>
            <person name="Choisne N."/>
            <person name="Couloux A."/>
            <person name="Cournoyer B."/>
            <person name="Cruveiller S."/>
            <person name="Daubin V."/>
            <person name="Demange N."/>
            <person name="Francino M.P."/>
            <person name="Goltsman E."/>
            <person name="Huang Y."/>
            <person name="Kopp O.R."/>
            <person name="Labarre L."/>
            <person name="Lapidus A."/>
            <person name="Lavire C."/>
            <person name="Marechal J."/>
            <person name="Martinez M."/>
            <person name="Mastronunzio J.E."/>
            <person name="Mullin B.C."/>
            <person name="Niemann J."/>
            <person name="Pujic P."/>
            <person name="Rawnsley T."/>
            <person name="Rouy Z."/>
            <person name="Schenowitz C."/>
            <person name="Sellstedt A."/>
            <person name="Tavares F."/>
            <person name="Tomkins J.P."/>
            <person name="Vallenet D."/>
            <person name="Valverde C."/>
            <person name="Wall L.G."/>
            <person name="Wang Y."/>
            <person name="Medigue C."/>
            <person name="Benson D.R."/>
        </authorList>
    </citation>
    <scope>NUCLEOTIDE SEQUENCE [LARGE SCALE GENOMIC DNA]</scope>
    <source>
        <strain>EAN1pec</strain>
    </source>
</reference>
<comment type="function">
    <text evidence="1">This is one of the proteins that bind and probably mediate the attachment of the 5S RNA into the large ribosomal subunit, where it forms part of the central protuberance. In the 70S ribosome it contacts protein S13 of the 30S subunit (bridge B1b), connecting the 2 subunits; this bridge is implicated in subunit movement. Contacts the P site tRNA; the 5S rRNA and some of its associated proteins might help stabilize positioning of ribosome-bound tRNAs.</text>
</comment>
<comment type="subunit">
    <text evidence="1">Part of the 50S ribosomal subunit; part of the 5S rRNA/L5/L18/L25 subcomplex. Contacts the 5S rRNA and the P site tRNA. Forms a bridge to the 30S subunit in the 70S ribosome.</text>
</comment>
<comment type="similarity">
    <text evidence="1">Belongs to the universal ribosomal protein uL5 family.</text>
</comment>
<feature type="chain" id="PRO_1000142403" description="Large ribosomal subunit protein uL5">
    <location>
        <begin position="1"/>
        <end position="189"/>
    </location>
</feature>
<accession>A8LC44</accession>